<keyword id="KW-0025">Alternative splicing</keyword>
<keyword id="KW-0106">Calcium</keyword>
<keyword id="KW-1015">Disulfide bond</keyword>
<keyword id="KW-0325">Glycoprotein</keyword>
<keyword id="KW-0393">Immunoglobulin domain</keyword>
<keyword id="KW-0479">Metal-binding</keyword>
<keyword id="KW-1267">Proteomics identification</keyword>
<keyword id="KW-1185">Reference proteome</keyword>
<keyword id="KW-0677">Repeat</keyword>
<keyword id="KW-0964">Secreted</keyword>
<keyword id="KW-0732">Signal</keyword>
<gene>
    <name type="primary">FSTL5</name>
    <name type="synonym">KIAA1263</name>
</gene>
<protein>
    <recommendedName>
        <fullName>Follistatin-related protein 5</fullName>
    </recommendedName>
    <alternativeName>
        <fullName>Follistatin-like protein 5</fullName>
    </alternativeName>
</protein>
<organism>
    <name type="scientific">Homo sapiens</name>
    <name type="common">Human</name>
    <dbReference type="NCBI Taxonomy" id="9606"/>
    <lineage>
        <taxon>Eukaryota</taxon>
        <taxon>Metazoa</taxon>
        <taxon>Chordata</taxon>
        <taxon>Craniata</taxon>
        <taxon>Vertebrata</taxon>
        <taxon>Euteleostomi</taxon>
        <taxon>Mammalia</taxon>
        <taxon>Eutheria</taxon>
        <taxon>Euarchontoglires</taxon>
        <taxon>Primates</taxon>
        <taxon>Haplorrhini</taxon>
        <taxon>Catarrhini</taxon>
        <taxon>Hominidae</taxon>
        <taxon>Homo</taxon>
    </lineage>
</organism>
<name>FSTL5_HUMAN</name>
<proteinExistence type="evidence at protein level"/>
<evidence type="ECO:0000250" key="1"/>
<evidence type="ECO:0000255" key="2"/>
<evidence type="ECO:0000255" key="3">
    <source>
        <dbReference type="PROSITE-ProRule" id="PRU00448"/>
    </source>
</evidence>
<evidence type="ECO:0000255" key="4">
    <source>
        <dbReference type="PROSITE-ProRule" id="PRU00798"/>
    </source>
</evidence>
<evidence type="ECO:0000255" key="5">
    <source>
        <dbReference type="PROSITE-ProRule" id="PRU10142"/>
    </source>
</evidence>
<evidence type="ECO:0000269" key="6">
    <source>
    </source>
</evidence>
<evidence type="ECO:0000303" key="7">
    <source>
    </source>
</evidence>
<evidence type="ECO:0000303" key="8">
    <source>
    </source>
</evidence>
<evidence type="ECO:0000305" key="9"/>
<reference key="1">
    <citation type="journal article" date="1999" name="DNA Res.">
        <title>Prediction of the coding sequences of unidentified human genes. XV. The complete sequences of 100 new cDNA clones from brain which code for large proteins in vitro.</title>
        <authorList>
            <person name="Nagase T."/>
            <person name="Ishikawa K."/>
            <person name="Kikuno R."/>
            <person name="Hirosawa M."/>
            <person name="Nomura N."/>
            <person name="Ohara O."/>
        </authorList>
    </citation>
    <scope>NUCLEOTIDE SEQUENCE [LARGE SCALE MRNA] (ISOFORM 2)</scope>
    <source>
        <tissue>Brain</tissue>
    </source>
</reference>
<reference key="2">
    <citation type="journal article" date="2004" name="Nat. Genet.">
        <title>Complete sequencing and characterization of 21,243 full-length human cDNAs.</title>
        <authorList>
            <person name="Ota T."/>
            <person name="Suzuki Y."/>
            <person name="Nishikawa T."/>
            <person name="Otsuki T."/>
            <person name="Sugiyama T."/>
            <person name="Irie R."/>
            <person name="Wakamatsu A."/>
            <person name="Hayashi K."/>
            <person name="Sato H."/>
            <person name="Nagai K."/>
            <person name="Kimura K."/>
            <person name="Makita H."/>
            <person name="Sekine M."/>
            <person name="Obayashi M."/>
            <person name="Nishi T."/>
            <person name="Shibahara T."/>
            <person name="Tanaka T."/>
            <person name="Ishii S."/>
            <person name="Yamamoto J."/>
            <person name="Saito K."/>
            <person name="Kawai Y."/>
            <person name="Isono Y."/>
            <person name="Nakamura Y."/>
            <person name="Nagahari K."/>
            <person name="Murakami K."/>
            <person name="Yasuda T."/>
            <person name="Iwayanagi T."/>
            <person name="Wagatsuma M."/>
            <person name="Shiratori A."/>
            <person name="Sudo H."/>
            <person name="Hosoiri T."/>
            <person name="Kaku Y."/>
            <person name="Kodaira H."/>
            <person name="Kondo H."/>
            <person name="Sugawara M."/>
            <person name="Takahashi M."/>
            <person name="Kanda K."/>
            <person name="Yokoi T."/>
            <person name="Furuya T."/>
            <person name="Kikkawa E."/>
            <person name="Omura Y."/>
            <person name="Abe K."/>
            <person name="Kamihara K."/>
            <person name="Katsuta N."/>
            <person name="Sato K."/>
            <person name="Tanikawa M."/>
            <person name="Yamazaki M."/>
            <person name="Ninomiya K."/>
            <person name="Ishibashi T."/>
            <person name="Yamashita H."/>
            <person name="Murakawa K."/>
            <person name="Fujimori K."/>
            <person name="Tanai H."/>
            <person name="Kimata M."/>
            <person name="Watanabe M."/>
            <person name="Hiraoka S."/>
            <person name="Chiba Y."/>
            <person name="Ishida S."/>
            <person name="Ono Y."/>
            <person name="Takiguchi S."/>
            <person name="Watanabe S."/>
            <person name="Yosida M."/>
            <person name="Hotuta T."/>
            <person name="Kusano J."/>
            <person name="Kanehori K."/>
            <person name="Takahashi-Fujii A."/>
            <person name="Hara H."/>
            <person name="Tanase T.-O."/>
            <person name="Nomura Y."/>
            <person name="Togiya S."/>
            <person name="Komai F."/>
            <person name="Hara R."/>
            <person name="Takeuchi K."/>
            <person name="Arita M."/>
            <person name="Imose N."/>
            <person name="Musashino K."/>
            <person name="Yuuki H."/>
            <person name="Oshima A."/>
            <person name="Sasaki N."/>
            <person name="Aotsuka S."/>
            <person name="Yoshikawa Y."/>
            <person name="Matsunawa H."/>
            <person name="Ichihara T."/>
            <person name="Shiohata N."/>
            <person name="Sano S."/>
            <person name="Moriya S."/>
            <person name="Momiyama H."/>
            <person name="Satoh N."/>
            <person name="Takami S."/>
            <person name="Terashima Y."/>
            <person name="Suzuki O."/>
            <person name="Nakagawa S."/>
            <person name="Senoh A."/>
            <person name="Mizoguchi H."/>
            <person name="Goto Y."/>
            <person name="Shimizu F."/>
            <person name="Wakebe H."/>
            <person name="Hishigaki H."/>
            <person name="Watanabe T."/>
            <person name="Sugiyama A."/>
            <person name="Takemoto M."/>
            <person name="Kawakami B."/>
            <person name="Yamazaki M."/>
            <person name="Watanabe K."/>
            <person name="Kumagai A."/>
            <person name="Itakura S."/>
            <person name="Fukuzumi Y."/>
            <person name="Fujimori Y."/>
            <person name="Komiyama M."/>
            <person name="Tashiro H."/>
            <person name="Tanigami A."/>
            <person name="Fujiwara T."/>
            <person name="Ono T."/>
            <person name="Yamada K."/>
            <person name="Fujii Y."/>
            <person name="Ozaki K."/>
            <person name="Hirao M."/>
            <person name="Ohmori Y."/>
            <person name="Kawabata A."/>
            <person name="Hikiji T."/>
            <person name="Kobatake N."/>
            <person name="Inagaki H."/>
            <person name="Ikema Y."/>
            <person name="Okamoto S."/>
            <person name="Okitani R."/>
            <person name="Kawakami T."/>
            <person name="Noguchi S."/>
            <person name="Itoh T."/>
            <person name="Shigeta K."/>
            <person name="Senba T."/>
            <person name="Matsumura K."/>
            <person name="Nakajima Y."/>
            <person name="Mizuno T."/>
            <person name="Morinaga M."/>
            <person name="Sasaki M."/>
            <person name="Togashi T."/>
            <person name="Oyama M."/>
            <person name="Hata H."/>
            <person name="Watanabe M."/>
            <person name="Komatsu T."/>
            <person name="Mizushima-Sugano J."/>
            <person name="Satoh T."/>
            <person name="Shirai Y."/>
            <person name="Takahashi Y."/>
            <person name="Nakagawa K."/>
            <person name="Okumura K."/>
            <person name="Nagase T."/>
            <person name="Nomura N."/>
            <person name="Kikuchi H."/>
            <person name="Masuho Y."/>
            <person name="Yamashita R."/>
            <person name="Nakai K."/>
            <person name="Yada T."/>
            <person name="Nakamura Y."/>
            <person name="Ohara O."/>
            <person name="Isogai T."/>
            <person name="Sugano S."/>
        </authorList>
    </citation>
    <scope>NUCLEOTIDE SEQUENCE [LARGE SCALE MRNA] (ISOFORM 3)</scope>
    <source>
        <tissue>Brain</tissue>
    </source>
</reference>
<reference key="3">
    <citation type="journal article" date="2005" name="Nature">
        <title>Generation and annotation of the DNA sequences of human chromosomes 2 and 4.</title>
        <authorList>
            <person name="Hillier L.W."/>
            <person name="Graves T.A."/>
            <person name="Fulton R.S."/>
            <person name="Fulton L.A."/>
            <person name="Pepin K.H."/>
            <person name="Minx P."/>
            <person name="Wagner-McPherson C."/>
            <person name="Layman D."/>
            <person name="Wylie K."/>
            <person name="Sekhon M."/>
            <person name="Becker M.C."/>
            <person name="Fewell G.A."/>
            <person name="Delehaunty K.D."/>
            <person name="Miner T.L."/>
            <person name="Nash W.E."/>
            <person name="Kremitzki C."/>
            <person name="Oddy L."/>
            <person name="Du H."/>
            <person name="Sun H."/>
            <person name="Bradshaw-Cordum H."/>
            <person name="Ali J."/>
            <person name="Carter J."/>
            <person name="Cordes M."/>
            <person name="Harris A."/>
            <person name="Isak A."/>
            <person name="van Brunt A."/>
            <person name="Nguyen C."/>
            <person name="Du F."/>
            <person name="Courtney L."/>
            <person name="Kalicki J."/>
            <person name="Ozersky P."/>
            <person name="Abbott S."/>
            <person name="Armstrong J."/>
            <person name="Belter E.A."/>
            <person name="Caruso L."/>
            <person name="Cedroni M."/>
            <person name="Cotton M."/>
            <person name="Davidson T."/>
            <person name="Desai A."/>
            <person name="Elliott G."/>
            <person name="Erb T."/>
            <person name="Fronick C."/>
            <person name="Gaige T."/>
            <person name="Haakenson W."/>
            <person name="Haglund K."/>
            <person name="Holmes A."/>
            <person name="Harkins R."/>
            <person name="Kim K."/>
            <person name="Kruchowski S.S."/>
            <person name="Strong C.M."/>
            <person name="Grewal N."/>
            <person name="Goyea E."/>
            <person name="Hou S."/>
            <person name="Levy A."/>
            <person name="Martinka S."/>
            <person name="Mead K."/>
            <person name="McLellan M.D."/>
            <person name="Meyer R."/>
            <person name="Randall-Maher J."/>
            <person name="Tomlinson C."/>
            <person name="Dauphin-Kohlberg S."/>
            <person name="Kozlowicz-Reilly A."/>
            <person name="Shah N."/>
            <person name="Swearengen-Shahid S."/>
            <person name="Snider J."/>
            <person name="Strong J.T."/>
            <person name="Thompson J."/>
            <person name="Yoakum M."/>
            <person name="Leonard S."/>
            <person name="Pearman C."/>
            <person name="Trani L."/>
            <person name="Radionenko M."/>
            <person name="Waligorski J.E."/>
            <person name="Wang C."/>
            <person name="Rock S.M."/>
            <person name="Tin-Wollam A.-M."/>
            <person name="Maupin R."/>
            <person name="Latreille P."/>
            <person name="Wendl M.C."/>
            <person name="Yang S.-P."/>
            <person name="Pohl C."/>
            <person name="Wallis J.W."/>
            <person name="Spieth J."/>
            <person name="Bieri T.A."/>
            <person name="Berkowicz N."/>
            <person name="Nelson J.O."/>
            <person name="Osborne J."/>
            <person name="Ding L."/>
            <person name="Meyer R."/>
            <person name="Sabo A."/>
            <person name="Shotland Y."/>
            <person name="Sinha P."/>
            <person name="Wohldmann P.E."/>
            <person name="Cook L.L."/>
            <person name="Hickenbotham M.T."/>
            <person name="Eldred J."/>
            <person name="Williams D."/>
            <person name="Jones T.A."/>
            <person name="She X."/>
            <person name="Ciccarelli F.D."/>
            <person name="Izaurralde E."/>
            <person name="Taylor J."/>
            <person name="Schmutz J."/>
            <person name="Myers R.M."/>
            <person name="Cox D.R."/>
            <person name="Huang X."/>
            <person name="McPherson J.D."/>
            <person name="Mardis E.R."/>
            <person name="Clifton S.W."/>
            <person name="Warren W.C."/>
            <person name="Chinwalla A.T."/>
            <person name="Eddy S.R."/>
            <person name="Marra M.A."/>
            <person name="Ovcharenko I."/>
            <person name="Furey T.S."/>
            <person name="Miller W."/>
            <person name="Eichler E.E."/>
            <person name="Bork P."/>
            <person name="Suyama M."/>
            <person name="Torrents D."/>
            <person name="Waterston R.H."/>
            <person name="Wilson R.K."/>
        </authorList>
    </citation>
    <scope>NUCLEOTIDE SEQUENCE [LARGE SCALE GENOMIC DNA]</scope>
</reference>
<reference key="4">
    <citation type="journal article" date="2004" name="Genome Res.">
        <title>The status, quality, and expansion of the NIH full-length cDNA project: the Mammalian Gene Collection (MGC).</title>
        <authorList>
            <consortium name="The MGC Project Team"/>
        </authorList>
    </citation>
    <scope>NUCLEOTIDE SEQUENCE [LARGE SCALE MRNA] (ISOFORM 1)</scope>
    <source>
        <tissue>Brain</tissue>
    </source>
</reference>
<reference key="5">
    <citation type="journal article" date="2007" name="BMC Genomics">
        <title>The full-ORF clone resource of the German cDNA consortium.</title>
        <authorList>
            <person name="Bechtel S."/>
            <person name="Rosenfelder H."/>
            <person name="Duda A."/>
            <person name="Schmidt C.P."/>
            <person name="Ernst U."/>
            <person name="Wellenreuther R."/>
            <person name="Mehrle A."/>
            <person name="Schuster C."/>
            <person name="Bahr A."/>
            <person name="Bloecker H."/>
            <person name="Heubner D."/>
            <person name="Hoerlein A."/>
            <person name="Michel G."/>
            <person name="Wedler H."/>
            <person name="Koehrer K."/>
            <person name="Ottenwaelder B."/>
            <person name="Poustka A."/>
            <person name="Wiemann S."/>
            <person name="Schupp I."/>
        </authorList>
    </citation>
    <scope>NUCLEOTIDE SEQUENCE [LARGE SCALE MRNA] OF 75-847 (ISOFORM 1)</scope>
    <source>
        <tissue>Kidney</tissue>
    </source>
</reference>
<reference key="6">
    <citation type="journal article" date="2006" name="Science">
        <title>The consensus coding sequences of human breast and colorectal cancers.</title>
        <authorList>
            <person name="Sjoeblom T."/>
            <person name="Jones S."/>
            <person name="Wood L.D."/>
            <person name="Parsons D.W."/>
            <person name="Lin J."/>
            <person name="Barber T.D."/>
            <person name="Mandelker D."/>
            <person name="Leary R.J."/>
            <person name="Ptak J."/>
            <person name="Silliman N."/>
            <person name="Szabo S."/>
            <person name="Buckhaults P."/>
            <person name="Farrell C."/>
            <person name="Meeh P."/>
            <person name="Markowitz S.D."/>
            <person name="Willis J."/>
            <person name="Dawson D."/>
            <person name="Willson J.K.V."/>
            <person name="Gazdar A.F."/>
            <person name="Hartigan J."/>
            <person name="Wu L."/>
            <person name="Liu C."/>
            <person name="Parmigiani G."/>
            <person name="Park B.H."/>
            <person name="Bachman K.E."/>
            <person name="Papadopoulos N."/>
            <person name="Vogelstein B."/>
            <person name="Kinzler K.W."/>
            <person name="Velculescu V.E."/>
        </authorList>
    </citation>
    <scope>VARIANT [LARGE SCALE ANALYSIS] ILE-92</scope>
</reference>
<dbReference type="EMBL" id="AB033089">
    <property type="protein sequence ID" value="BAA86577.1"/>
    <property type="status" value="ALT_INIT"/>
    <property type="molecule type" value="mRNA"/>
</dbReference>
<dbReference type="EMBL" id="AK315152">
    <property type="status" value="NOT_ANNOTATED_CDS"/>
    <property type="molecule type" value="mRNA"/>
</dbReference>
<dbReference type="EMBL" id="AC023136">
    <property type="status" value="NOT_ANNOTATED_CDS"/>
    <property type="molecule type" value="Genomic_DNA"/>
</dbReference>
<dbReference type="EMBL" id="AC079227">
    <property type="status" value="NOT_ANNOTATED_CDS"/>
    <property type="molecule type" value="Genomic_DNA"/>
</dbReference>
<dbReference type="EMBL" id="AC084281">
    <property type="status" value="NOT_ANNOTATED_CDS"/>
    <property type="molecule type" value="Genomic_DNA"/>
</dbReference>
<dbReference type="EMBL" id="AC096717">
    <property type="status" value="NOT_ANNOTATED_CDS"/>
    <property type="molecule type" value="Genomic_DNA"/>
</dbReference>
<dbReference type="EMBL" id="AC104793">
    <property type="status" value="NOT_ANNOTATED_CDS"/>
    <property type="molecule type" value="Genomic_DNA"/>
</dbReference>
<dbReference type="EMBL" id="AC105251">
    <property type="status" value="NOT_ANNOTATED_CDS"/>
    <property type="molecule type" value="Genomic_DNA"/>
</dbReference>
<dbReference type="EMBL" id="AC108163">
    <property type="status" value="NOT_ANNOTATED_CDS"/>
    <property type="molecule type" value="Genomic_DNA"/>
</dbReference>
<dbReference type="EMBL" id="BC036502">
    <property type="protein sequence ID" value="AAH36502.1"/>
    <property type="molecule type" value="mRNA"/>
</dbReference>
<dbReference type="EMBL" id="AL137695">
    <property type="protein sequence ID" value="CAB70877.1"/>
    <property type="molecule type" value="mRNA"/>
</dbReference>
<dbReference type="CCDS" id="CCDS3802.1">
    <molecule id="Q8N475-1"/>
</dbReference>
<dbReference type="CCDS" id="CCDS47157.1">
    <molecule id="Q8N475-3"/>
</dbReference>
<dbReference type="CCDS" id="CCDS47158.1">
    <molecule id="Q8N475-2"/>
</dbReference>
<dbReference type="PIR" id="T46283">
    <property type="entry name" value="T46283"/>
</dbReference>
<dbReference type="RefSeq" id="NP_001121899.1">
    <molecule id="Q8N475-2"/>
    <property type="nucleotide sequence ID" value="NM_001128427.3"/>
</dbReference>
<dbReference type="RefSeq" id="NP_001121900.1">
    <molecule id="Q8N475-3"/>
    <property type="nucleotide sequence ID" value="NM_001128428.3"/>
</dbReference>
<dbReference type="RefSeq" id="NP_064501.2">
    <molecule id="Q8N475-1"/>
    <property type="nucleotide sequence ID" value="NM_020116.5"/>
</dbReference>
<dbReference type="RefSeq" id="XP_054206513.1">
    <molecule id="Q8N475-1"/>
    <property type="nucleotide sequence ID" value="XM_054350538.1"/>
</dbReference>
<dbReference type="RefSeq" id="XP_054206514.1">
    <molecule id="Q8N475-3"/>
    <property type="nucleotide sequence ID" value="XM_054350539.1"/>
</dbReference>
<dbReference type="SMR" id="Q8N475"/>
<dbReference type="BioGRID" id="121216">
    <property type="interactions" value="2"/>
</dbReference>
<dbReference type="FunCoup" id="Q8N475">
    <property type="interactions" value="112"/>
</dbReference>
<dbReference type="IntAct" id="Q8N475">
    <property type="interactions" value="4"/>
</dbReference>
<dbReference type="STRING" id="9606.ENSP00000305334"/>
<dbReference type="MEROPS" id="I01.977"/>
<dbReference type="GlyCosmos" id="Q8N475">
    <property type="glycosylation" value="2 sites, No reported glycans"/>
</dbReference>
<dbReference type="GlyGen" id="Q8N475">
    <property type="glycosylation" value="2 sites"/>
</dbReference>
<dbReference type="iPTMnet" id="Q8N475"/>
<dbReference type="PhosphoSitePlus" id="Q8N475"/>
<dbReference type="BioMuta" id="FSTL5"/>
<dbReference type="DMDM" id="62510692"/>
<dbReference type="MassIVE" id="Q8N475"/>
<dbReference type="PaxDb" id="9606-ENSP00000305334"/>
<dbReference type="PeptideAtlas" id="Q8N475"/>
<dbReference type="ProteomicsDB" id="19487"/>
<dbReference type="ProteomicsDB" id="71893">
    <molecule id="Q8N475-1"/>
</dbReference>
<dbReference type="Antibodypedia" id="28231">
    <property type="antibodies" value="102 antibodies from 19 providers"/>
</dbReference>
<dbReference type="DNASU" id="56884"/>
<dbReference type="Ensembl" id="ENST00000306100.10">
    <molecule id="Q8N475-1"/>
    <property type="protein sequence ID" value="ENSP00000305334.4"/>
    <property type="gene ID" value="ENSG00000168843.14"/>
</dbReference>
<dbReference type="Ensembl" id="ENST00000379164.8">
    <molecule id="Q8N475-2"/>
    <property type="protein sequence ID" value="ENSP00000368462.4"/>
    <property type="gene ID" value="ENSG00000168843.14"/>
</dbReference>
<dbReference type="Ensembl" id="ENST00000427802.2">
    <molecule id="Q8N475-3"/>
    <property type="protein sequence ID" value="ENSP00000389270.2"/>
    <property type="gene ID" value="ENSG00000168843.14"/>
</dbReference>
<dbReference type="GeneID" id="56884"/>
<dbReference type="KEGG" id="hsa:56884"/>
<dbReference type="MANE-Select" id="ENST00000306100.10">
    <property type="protein sequence ID" value="ENSP00000305334.4"/>
    <property type="RefSeq nucleotide sequence ID" value="NM_020116.5"/>
    <property type="RefSeq protein sequence ID" value="NP_064501.2"/>
</dbReference>
<dbReference type="UCSC" id="uc003iqh.5">
    <molecule id="Q8N475-1"/>
    <property type="organism name" value="human"/>
</dbReference>
<dbReference type="AGR" id="HGNC:21386"/>
<dbReference type="CTD" id="56884"/>
<dbReference type="DisGeNET" id="56884"/>
<dbReference type="GeneCards" id="FSTL5"/>
<dbReference type="HGNC" id="HGNC:21386">
    <property type="gene designation" value="FSTL5"/>
</dbReference>
<dbReference type="HPA" id="ENSG00000168843">
    <property type="expression patterns" value="Group enriched (brain, retina)"/>
</dbReference>
<dbReference type="MIM" id="620128">
    <property type="type" value="gene"/>
</dbReference>
<dbReference type="neXtProt" id="NX_Q8N475"/>
<dbReference type="OpenTargets" id="ENSG00000168843"/>
<dbReference type="PharmGKB" id="PA134978045"/>
<dbReference type="VEuPathDB" id="HostDB:ENSG00000168843"/>
<dbReference type="eggNOG" id="ENOG502QPNV">
    <property type="taxonomic scope" value="Eukaryota"/>
</dbReference>
<dbReference type="GeneTree" id="ENSGT00940000156495"/>
<dbReference type="HOGENOM" id="CLU_007849_1_0_1"/>
<dbReference type="InParanoid" id="Q8N475"/>
<dbReference type="OMA" id="IHAGNYT"/>
<dbReference type="OrthoDB" id="6085115at2759"/>
<dbReference type="PAN-GO" id="Q8N475">
    <property type="GO annotations" value="2 GO annotations based on evolutionary models"/>
</dbReference>
<dbReference type="PhylomeDB" id="Q8N475"/>
<dbReference type="TreeFam" id="TF350473"/>
<dbReference type="PathwayCommons" id="Q8N475"/>
<dbReference type="SignaLink" id="Q8N475"/>
<dbReference type="BioGRID-ORCS" id="56884">
    <property type="hits" value="20 hits in 1155 CRISPR screens"/>
</dbReference>
<dbReference type="ChiTaRS" id="FSTL5">
    <property type="organism name" value="human"/>
</dbReference>
<dbReference type="GenomeRNAi" id="56884"/>
<dbReference type="Pharos" id="Q8N475">
    <property type="development level" value="Tbio"/>
</dbReference>
<dbReference type="PRO" id="PR:Q8N475"/>
<dbReference type="Proteomes" id="UP000005640">
    <property type="component" value="Chromosome 4"/>
</dbReference>
<dbReference type="RNAct" id="Q8N475">
    <property type="molecule type" value="protein"/>
</dbReference>
<dbReference type="Bgee" id="ENSG00000168843">
    <property type="expression patterns" value="Expressed in cerebellar vermis and 101 other cell types or tissues"/>
</dbReference>
<dbReference type="GO" id="GO:0005576">
    <property type="term" value="C:extracellular region"/>
    <property type="evidence" value="ECO:0000318"/>
    <property type="project" value="GO_Central"/>
</dbReference>
<dbReference type="GO" id="GO:0005509">
    <property type="term" value="F:calcium ion binding"/>
    <property type="evidence" value="ECO:0007669"/>
    <property type="project" value="InterPro"/>
</dbReference>
<dbReference type="GO" id="GO:0030154">
    <property type="term" value="P:cell differentiation"/>
    <property type="evidence" value="ECO:0000318"/>
    <property type="project" value="GO_Central"/>
</dbReference>
<dbReference type="GO" id="GO:0030510">
    <property type="term" value="P:regulation of BMP signaling pathway"/>
    <property type="evidence" value="ECO:0000318"/>
    <property type="project" value="GO_Central"/>
</dbReference>
<dbReference type="CDD" id="cd00096">
    <property type="entry name" value="Ig"/>
    <property type="match status" value="1"/>
</dbReference>
<dbReference type="CDD" id="cd05736">
    <property type="entry name" value="IgI_2_Follistatin_like"/>
    <property type="match status" value="1"/>
</dbReference>
<dbReference type="CDD" id="cd00104">
    <property type="entry name" value="KAZAL_FS"/>
    <property type="match status" value="1"/>
</dbReference>
<dbReference type="FunFam" id="2.60.40.10:FF:000653">
    <property type="entry name" value="Follistatin like 4"/>
    <property type="match status" value="1"/>
</dbReference>
<dbReference type="FunFam" id="2.60.40.10:FF:002358">
    <property type="entry name" value="Follistatin like 4"/>
    <property type="match status" value="1"/>
</dbReference>
<dbReference type="FunFam" id="3.30.60.30:FF:000007">
    <property type="entry name" value="follistatin-related protein 5 isoform X1"/>
    <property type="match status" value="1"/>
</dbReference>
<dbReference type="FunFam" id="1.10.238.10:FF:000140">
    <property type="entry name" value="follistatin-related protein 5 isoform X2"/>
    <property type="match status" value="1"/>
</dbReference>
<dbReference type="Gene3D" id="3.30.60.30">
    <property type="match status" value="1"/>
</dbReference>
<dbReference type="Gene3D" id="1.10.238.10">
    <property type="entry name" value="EF-hand"/>
    <property type="match status" value="1"/>
</dbReference>
<dbReference type="Gene3D" id="2.60.40.10">
    <property type="entry name" value="Immunoglobulins"/>
    <property type="match status" value="2"/>
</dbReference>
<dbReference type="Gene3D" id="2.130.10.10">
    <property type="entry name" value="YVTN repeat-like/Quinoprotein amine dehydrogenase"/>
    <property type="match status" value="1"/>
</dbReference>
<dbReference type="InterPro" id="IPR011992">
    <property type="entry name" value="EF-hand-dom_pair"/>
</dbReference>
<dbReference type="InterPro" id="IPR018247">
    <property type="entry name" value="EF_Hand_1_Ca_BS"/>
</dbReference>
<dbReference type="InterPro" id="IPR002048">
    <property type="entry name" value="EF_hand_dom"/>
</dbReference>
<dbReference type="InterPro" id="IPR007110">
    <property type="entry name" value="Ig-like_dom"/>
</dbReference>
<dbReference type="InterPro" id="IPR036179">
    <property type="entry name" value="Ig-like_dom_sf"/>
</dbReference>
<dbReference type="InterPro" id="IPR013783">
    <property type="entry name" value="Ig-like_fold"/>
</dbReference>
<dbReference type="InterPro" id="IPR003599">
    <property type="entry name" value="Ig_sub"/>
</dbReference>
<dbReference type="InterPro" id="IPR003598">
    <property type="entry name" value="Ig_sub2"/>
</dbReference>
<dbReference type="InterPro" id="IPR002350">
    <property type="entry name" value="Kazal_dom"/>
</dbReference>
<dbReference type="InterPro" id="IPR036058">
    <property type="entry name" value="Kazal_dom_sf"/>
</dbReference>
<dbReference type="InterPro" id="IPR050653">
    <property type="entry name" value="Prot_Inhib_GrowthFact_Antg"/>
</dbReference>
<dbReference type="InterPro" id="IPR015943">
    <property type="entry name" value="WD40/YVTN_repeat-like_dom_sf"/>
</dbReference>
<dbReference type="PANTHER" id="PTHR10913">
    <property type="entry name" value="FOLLISTATIN-RELATED"/>
    <property type="match status" value="1"/>
</dbReference>
<dbReference type="PANTHER" id="PTHR10913:SF44">
    <property type="entry name" value="FOLLISTATIN-RELATED PROTEIN 5"/>
    <property type="match status" value="1"/>
</dbReference>
<dbReference type="Pfam" id="PF13927">
    <property type="entry name" value="Ig_3"/>
    <property type="match status" value="2"/>
</dbReference>
<dbReference type="Pfam" id="PF07648">
    <property type="entry name" value="Kazal_2"/>
    <property type="match status" value="1"/>
</dbReference>
<dbReference type="SMART" id="SM00409">
    <property type="entry name" value="IG"/>
    <property type="match status" value="2"/>
</dbReference>
<dbReference type="SMART" id="SM00408">
    <property type="entry name" value="IGc2"/>
    <property type="match status" value="2"/>
</dbReference>
<dbReference type="SMART" id="SM00280">
    <property type="entry name" value="KAZAL"/>
    <property type="match status" value="1"/>
</dbReference>
<dbReference type="SUPFAM" id="SSF75011">
    <property type="entry name" value="3-carboxy-cis,cis-mucoante lactonizing enzyme"/>
    <property type="match status" value="1"/>
</dbReference>
<dbReference type="SUPFAM" id="SSF47473">
    <property type="entry name" value="EF-hand"/>
    <property type="match status" value="1"/>
</dbReference>
<dbReference type="SUPFAM" id="SSF48726">
    <property type="entry name" value="Immunoglobulin"/>
    <property type="match status" value="2"/>
</dbReference>
<dbReference type="SUPFAM" id="SSF100895">
    <property type="entry name" value="Kazal-type serine protease inhibitors"/>
    <property type="match status" value="1"/>
</dbReference>
<dbReference type="PROSITE" id="PS00018">
    <property type="entry name" value="EF_HAND_1"/>
    <property type="match status" value="2"/>
</dbReference>
<dbReference type="PROSITE" id="PS50222">
    <property type="entry name" value="EF_HAND_2"/>
    <property type="match status" value="1"/>
</dbReference>
<dbReference type="PROSITE" id="PS50835">
    <property type="entry name" value="IG_LIKE"/>
    <property type="match status" value="2"/>
</dbReference>
<dbReference type="PROSITE" id="PS51465">
    <property type="entry name" value="KAZAL_2"/>
    <property type="match status" value="1"/>
</dbReference>
<feature type="signal peptide" evidence="2">
    <location>
        <begin position="1"/>
        <end position="20"/>
    </location>
</feature>
<feature type="chain" id="PRO_0000010118" description="Follistatin-related protein 5">
    <location>
        <begin position="21"/>
        <end position="847"/>
    </location>
</feature>
<feature type="domain" description="Kazal-like" evidence="4">
    <location>
        <begin position="83"/>
        <end position="135"/>
    </location>
</feature>
<feature type="domain" description="EF-hand 1" evidence="3">
    <location>
        <begin position="175"/>
        <end position="210"/>
    </location>
</feature>
<feature type="domain" description="EF-hand 2" evidence="9">
    <location>
        <begin position="211"/>
        <end position="246"/>
    </location>
</feature>
<feature type="domain" description="Ig-like 1">
    <location>
        <begin position="250"/>
        <end position="337"/>
    </location>
</feature>
<feature type="domain" description="Ig-like 2">
    <location>
        <begin position="341"/>
        <end position="426"/>
    </location>
</feature>
<feature type="binding site" evidence="3">
    <location>
        <position position="188"/>
    </location>
    <ligand>
        <name>Ca(2+)</name>
        <dbReference type="ChEBI" id="CHEBI:29108"/>
        <label>1</label>
    </ligand>
</feature>
<feature type="binding site" evidence="3">
    <location>
        <position position="190"/>
    </location>
    <ligand>
        <name>Ca(2+)</name>
        <dbReference type="ChEBI" id="CHEBI:29108"/>
        <label>1</label>
    </ligand>
</feature>
<feature type="binding site" evidence="3">
    <location>
        <position position="192"/>
    </location>
    <ligand>
        <name>Ca(2+)</name>
        <dbReference type="ChEBI" id="CHEBI:29108"/>
        <label>1</label>
    </ligand>
</feature>
<feature type="binding site" evidence="3">
    <location>
        <position position="199"/>
    </location>
    <ligand>
        <name>Ca(2+)</name>
        <dbReference type="ChEBI" id="CHEBI:29108"/>
        <label>1</label>
    </ligand>
</feature>
<feature type="binding site" evidence="5">
    <location>
        <position position="226"/>
    </location>
    <ligand>
        <name>Ca(2+)</name>
        <dbReference type="ChEBI" id="CHEBI:29108"/>
        <label>2</label>
    </ligand>
</feature>
<feature type="binding site" evidence="5">
    <location>
        <position position="228"/>
    </location>
    <ligand>
        <name>Ca(2+)</name>
        <dbReference type="ChEBI" id="CHEBI:29108"/>
        <label>2</label>
    </ligand>
</feature>
<feature type="binding site" evidence="5">
    <location>
        <position position="230"/>
    </location>
    <ligand>
        <name>Ca(2+)</name>
        <dbReference type="ChEBI" id="CHEBI:29108"/>
        <label>2</label>
    </ligand>
</feature>
<feature type="binding site" evidence="5">
    <location>
        <position position="232"/>
    </location>
    <ligand>
        <name>Ca(2+)</name>
        <dbReference type="ChEBI" id="CHEBI:29108"/>
        <label>2</label>
    </ligand>
</feature>
<feature type="binding site" evidence="5">
    <location>
        <position position="237"/>
    </location>
    <ligand>
        <name>Ca(2+)</name>
        <dbReference type="ChEBI" id="CHEBI:29108"/>
        <label>2</label>
    </ligand>
</feature>
<feature type="glycosylation site" description="N-linked (GlcNAc...) asparagine" evidence="2">
    <location>
        <position position="318"/>
    </location>
</feature>
<feature type="glycosylation site" description="N-linked (GlcNAc...) asparagine" evidence="2">
    <location>
        <position position="394"/>
    </location>
</feature>
<feature type="disulfide bond" evidence="4">
    <location>
        <begin position="89"/>
        <end position="119"/>
    </location>
</feature>
<feature type="disulfide bond" evidence="4">
    <location>
        <begin position="93"/>
        <end position="112"/>
    </location>
</feature>
<feature type="disulfide bond" evidence="4">
    <location>
        <begin position="101"/>
        <end position="133"/>
    </location>
</feature>
<feature type="disulfide bond" evidence="1">
    <location>
        <begin position="270"/>
        <end position="321"/>
    </location>
</feature>
<feature type="disulfide bond" evidence="1">
    <location>
        <begin position="362"/>
        <end position="413"/>
    </location>
</feature>
<feature type="splice variant" id="VSP_046215" description="In isoform 2 and isoform 3." evidence="7 8">
    <location>
        <position position="43"/>
    </location>
</feature>
<feature type="splice variant" id="VSP_046216" description="In isoform 3." evidence="8">
    <original>LANILWREEG</original>
    <variation>R</variation>
    <location>
        <begin position="438"/>
        <end position="447"/>
    </location>
</feature>
<feature type="sequence variant" id="VAR_036135" description="In a colorectal cancer sample; somatic mutation; dbSNP:rs747628234." evidence="6">
    <original>L</original>
    <variation>I</variation>
    <location>
        <position position="92"/>
    </location>
</feature>
<feature type="sequence variant" id="VAR_049092" description="In dbSNP:rs3749598.">
    <original>D</original>
    <variation>Y</variation>
    <location>
        <position position="711"/>
    </location>
</feature>
<feature type="sequence variant" id="VAR_049093" description="In dbSNP:rs17040982.">
    <original>K</original>
    <variation>E</variation>
    <location>
        <position position="815"/>
    </location>
</feature>
<feature type="sequence conflict" description="In Ref. 5; CAB70877." evidence="9" ref="5">
    <original>Y</original>
    <variation>C</variation>
    <location>
        <position position="145"/>
    </location>
</feature>
<feature type="sequence conflict" description="In Ref. 5; CAB70877." evidence="9" ref="5">
    <original>K</original>
    <variation>R</variation>
    <location>
        <position position="159"/>
    </location>
</feature>
<feature type="sequence conflict" description="In Ref. 5; CAB70877." evidence="9" ref="5">
    <original>G</original>
    <variation>D</variation>
    <location>
        <position position="193"/>
    </location>
</feature>
<feature type="sequence conflict" description="In Ref. 5; CAB70877." evidence="9" ref="5">
    <original>D</original>
    <variation>G</variation>
    <location>
        <position position="293"/>
    </location>
</feature>
<feature type="sequence conflict" description="In Ref. 5; CAB70877." evidence="9" ref="5">
    <original>K</original>
    <variation>I</variation>
    <location>
        <position position="492"/>
    </location>
</feature>
<feature type="sequence conflict" description="In Ref. 2; AK315152." evidence="9" ref="2">
    <original>S</original>
    <variation>G</variation>
    <location>
        <position position="560"/>
    </location>
</feature>
<feature type="sequence conflict" description="In Ref. 4; AAH36502." evidence="9" ref="4">
    <original>T</original>
    <variation>S</variation>
    <location>
        <position position="567"/>
    </location>
</feature>
<feature type="sequence conflict" description="In Ref. 4; AAH36502." evidence="9" ref="4">
    <original>L</original>
    <variation>I</variation>
    <location>
        <position position="631"/>
    </location>
</feature>
<sequence>MFKCWSVVLVLGFIFLESEGRPTKEGGYGLKSYQPLMRLRHKQEKNQESSRVKGFMIQDGPFGSCENKYCGLGRHCVTSRETGQAECACMDLCKRHYKPVCGSDGEFYENHCEVHRAACLKKQKITIVHNEDCFFKGDKCKTTEYSKMKNMLLDLQNQKYIMQENENPNGDDISRKKLLVDQMFKYFDADSNGLVDINELTQVIKQEELGKDLFDCTLYVLLKYDDFNADKHLALEEFYRAFQVIQLSLPEDQKLSITAATVGQSAVLSCAIQGTLRPPIIWKRNNIILNNLDLEDINDFGDDGSLYITKVTTTHVGNYTCYADGYEQVYQTHIFQVNVPPVIRVYPESQAREPGVTASLRCHAEGIPKPQLGWLKNGIDITPKLSKQLTLQANGSEVHISNVRYEDTGAYTCIAKNEAGVDEDISSLFVEDSARKTLANILWREEGLGIGNMFYVFYEDGIKVIQPIECEFQRHIKPSEKLLGFQDEVCPKAEGDEVQRCVWASAVNVKDKFIYVAQPTLDRVLIVDVQSQKVVQAVSTDPVPVKLHYDKSHDQVWVLSWGTLEKTSPTLQVITLASGNVPHHTIHTQPVGKQFDRVDDFFIPTTTLIITHMRFGFILHKDEAALQKIDLETMSYIKTINLKDYKCVPQSLAYTHLGGYYFIGCKPDSTGAVSPQVMVDGVTDSVIGFNSDVTGTPYVSPDGHYLVSINDVKGLVRVQYITIRGEIQEAFDIYTNLHISDLAFQPSFTEAHQYNIYGSSSTQTDVLFVELSSGKVKMIKSLKEPLKAEEWPWNRKNRQIQDSGLFGQYLMTPSKDSLFILDGRLNKLNCEITEVEKGNTVIWVGDA</sequence>
<comment type="subcellular location">
    <subcellularLocation>
        <location evidence="9">Secreted</location>
    </subcellularLocation>
</comment>
<comment type="alternative products">
    <event type="alternative splicing"/>
    <isoform>
        <id>Q8N475-1</id>
        <name>1</name>
        <sequence type="displayed"/>
    </isoform>
    <isoform>
        <id>Q8N475-2</id>
        <name>2</name>
        <sequence type="described" ref="VSP_046215"/>
    </isoform>
    <isoform>
        <id>Q8N475-3</id>
        <name>3</name>
        <sequence type="described" ref="VSP_046215 VSP_046216"/>
    </isoform>
</comment>
<comment type="sequence caution" evidence="9">
    <conflict type="erroneous initiation">
        <sequence resource="EMBL-CDS" id="BAA86577"/>
    </conflict>
</comment>
<accession>Q8N475</accession>
<accession>E9PCP6</accession>
<accession>Q9NSW7</accession>
<accession>Q9ULF7</accession>